<comment type="function">
    <text evidence="1 3">Plays a crucial role in the metabolism of thyroid hormones (TH) and has specific roles in TH activation and inactivation by deiodination (PubMed:9389494). Catalyzes the deiodination of L-thyroxine (T4) to 3,3',5'-triiodothyronine (rT3) and 3,5,3'-triiodothyronine (T3) to 3,3'-diiodothyronine (3,3'-T2) via inner-ring deiodination (IRD) (PubMed:9389494). Catalyzes the deiodination of rT3 to 3',5'-diiodothyronine (3',5'-T2), 3,3'-T2 to 3'-monoiodothyronine (3'-T1) and 3,5-diiodothyronine (3,5-T2) to 3-monoiodothyronine (3-T1) via IRD (By similarity). Catalyzes the deiodination of 3-T1 to L-thyronine (T0) via outer-ring deiodination (ORD) (By similarity). Catalyzes the tyrosyl ring deiodinations of 3,3',5,5'-tetraiodothyronamine, 3,3',5'-triiodothyronamine, 3,5,3'-triiodothyronamine, 3,5-diiodothyronamine, 3,3'-diiodothyronamine and 3-iodothyronamine (By similarity).</text>
</comment>
<comment type="catalytic activity">
    <reaction evidence="3">
        <text>3,3',5'-triiodo-L-thyronine + iodide + A + H(+) = L-thyroxine + AH2</text>
        <dbReference type="Rhea" id="RHEA:18897"/>
        <dbReference type="ChEBI" id="CHEBI:13193"/>
        <dbReference type="ChEBI" id="CHEBI:15378"/>
        <dbReference type="ChEBI" id="CHEBI:16382"/>
        <dbReference type="ChEBI" id="CHEBI:17499"/>
        <dbReference type="ChEBI" id="CHEBI:57261"/>
        <dbReference type="ChEBI" id="CHEBI:58448"/>
        <dbReference type="EC" id="1.21.99.3"/>
    </reaction>
    <physiologicalReaction direction="right-to-left" evidence="5">
        <dbReference type="Rhea" id="RHEA:18899"/>
    </physiologicalReaction>
</comment>
<comment type="catalytic activity">
    <reaction evidence="3">
        <text>3,3'-diiodo-L-thyronine + iodide + A + H(+) = 3,3',5-triiodo-L-thyronine + AH2</text>
        <dbReference type="Rhea" id="RHEA:82571"/>
        <dbReference type="ChEBI" id="CHEBI:13193"/>
        <dbReference type="ChEBI" id="CHEBI:15378"/>
        <dbReference type="ChEBI" id="CHEBI:16382"/>
        <dbReference type="ChEBI" id="CHEBI:17499"/>
        <dbReference type="ChEBI" id="CHEBI:176514"/>
        <dbReference type="ChEBI" id="CHEBI:533015"/>
    </reaction>
    <physiologicalReaction direction="right-to-left" evidence="5">
        <dbReference type="Rhea" id="RHEA:82573"/>
    </physiologicalReaction>
</comment>
<comment type="catalytic activity">
    <reaction evidence="1">
        <text>3-iodo-L-thyronine + iodide + A + H(+) = 3,5-diiodo-L-thyronine + AH2</text>
        <dbReference type="Rhea" id="RHEA:82895"/>
        <dbReference type="ChEBI" id="CHEBI:13193"/>
        <dbReference type="ChEBI" id="CHEBI:15378"/>
        <dbReference type="ChEBI" id="CHEBI:16382"/>
        <dbReference type="ChEBI" id="CHEBI:17499"/>
        <dbReference type="ChEBI" id="CHEBI:232626"/>
        <dbReference type="ChEBI" id="CHEBI:232627"/>
    </reaction>
    <physiologicalReaction direction="right-to-left" evidence="1">
        <dbReference type="Rhea" id="RHEA:82897"/>
    </physiologicalReaction>
</comment>
<comment type="catalytic activity">
    <reaction evidence="1">
        <text>L-thyronine + iodide + A + H(+) = 3-iodo-L-thyronine + AH2</text>
        <dbReference type="Rhea" id="RHEA:83771"/>
        <dbReference type="ChEBI" id="CHEBI:13193"/>
        <dbReference type="ChEBI" id="CHEBI:15378"/>
        <dbReference type="ChEBI" id="CHEBI:16382"/>
        <dbReference type="ChEBI" id="CHEBI:17499"/>
        <dbReference type="ChEBI" id="CHEBI:232627"/>
        <dbReference type="ChEBI" id="CHEBI:233333"/>
    </reaction>
    <physiologicalReaction direction="right-to-left" evidence="1">
        <dbReference type="Rhea" id="RHEA:83773"/>
    </physiologicalReaction>
</comment>
<comment type="catalytic activity">
    <reaction evidence="1">
        <text>3',5'-diiodo-L-thyronine + iodide + A + H(+) = 3,3',5'-triiodo-L-thyronine + AH2</text>
        <dbReference type="Rhea" id="RHEA:83775"/>
        <dbReference type="ChEBI" id="CHEBI:13193"/>
        <dbReference type="ChEBI" id="CHEBI:15378"/>
        <dbReference type="ChEBI" id="CHEBI:16382"/>
        <dbReference type="ChEBI" id="CHEBI:17499"/>
        <dbReference type="ChEBI" id="CHEBI:57261"/>
        <dbReference type="ChEBI" id="CHEBI:195762"/>
    </reaction>
    <physiologicalReaction direction="right-to-left" evidence="1">
        <dbReference type="Rhea" id="RHEA:83777"/>
    </physiologicalReaction>
</comment>
<comment type="catalytic activity">
    <reaction evidence="1">
        <text>3'-iodo-L-thyronine + iodide + A + H(+) = 3,3'-diiodo-L-thyronine + AH2</text>
        <dbReference type="Rhea" id="RHEA:83779"/>
        <dbReference type="ChEBI" id="CHEBI:13193"/>
        <dbReference type="ChEBI" id="CHEBI:15378"/>
        <dbReference type="ChEBI" id="CHEBI:16382"/>
        <dbReference type="ChEBI" id="CHEBI:17499"/>
        <dbReference type="ChEBI" id="CHEBI:176514"/>
        <dbReference type="ChEBI" id="CHEBI:232695"/>
    </reaction>
    <physiologicalReaction direction="right-to-left" evidence="1">
        <dbReference type="Rhea" id="RHEA:83781"/>
    </physiologicalReaction>
</comment>
<comment type="catalytic activity">
    <reaction evidence="1">
        <text>3,3',5'-triiodothyronamine + iodide + A + H(+) = 3,3',5,5'-tetraiodothyronamine + AH2</text>
        <dbReference type="Rhea" id="RHEA:83807"/>
        <dbReference type="ChEBI" id="CHEBI:13193"/>
        <dbReference type="ChEBI" id="CHEBI:15378"/>
        <dbReference type="ChEBI" id="CHEBI:16382"/>
        <dbReference type="ChEBI" id="CHEBI:17499"/>
        <dbReference type="ChEBI" id="CHEBI:233343"/>
        <dbReference type="ChEBI" id="CHEBI:233344"/>
    </reaction>
    <physiologicalReaction direction="right-to-left" evidence="1">
        <dbReference type="Rhea" id="RHEA:83809"/>
    </physiologicalReaction>
</comment>
<comment type="catalytic activity">
    <reaction evidence="1">
        <text>3',5'-diiodothyronamine + iodide + A + H(+) = 3,3',5'-triiodothyronamine + AH2</text>
        <dbReference type="Rhea" id="RHEA:83799"/>
        <dbReference type="ChEBI" id="CHEBI:13193"/>
        <dbReference type="ChEBI" id="CHEBI:15378"/>
        <dbReference type="ChEBI" id="CHEBI:16382"/>
        <dbReference type="ChEBI" id="CHEBI:17499"/>
        <dbReference type="ChEBI" id="CHEBI:233342"/>
        <dbReference type="ChEBI" id="CHEBI:233343"/>
    </reaction>
    <physiologicalReaction direction="right-to-left" evidence="1">
        <dbReference type="Rhea" id="RHEA:83801"/>
    </physiologicalReaction>
</comment>
<comment type="catalytic activity">
    <reaction evidence="1">
        <text>3,3'-diiodothyronamine + iodide + A + H(+) = 3,3',5-triiodothyronamine + AH2</text>
        <dbReference type="Rhea" id="RHEA:83811"/>
        <dbReference type="ChEBI" id="CHEBI:13193"/>
        <dbReference type="ChEBI" id="CHEBI:15378"/>
        <dbReference type="ChEBI" id="CHEBI:16382"/>
        <dbReference type="ChEBI" id="CHEBI:17499"/>
        <dbReference type="ChEBI" id="CHEBI:233341"/>
        <dbReference type="ChEBI" id="CHEBI:233426"/>
    </reaction>
    <physiologicalReaction direction="right-to-left" evidence="1">
        <dbReference type="Rhea" id="RHEA:83813"/>
    </physiologicalReaction>
</comment>
<comment type="catalytic activity">
    <reaction evidence="1">
        <text>3-iodothyronamine + iodide + A + H(+) = 3,5-diiodothyronamine + AH2</text>
        <dbReference type="Rhea" id="RHEA:83823"/>
        <dbReference type="ChEBI" id="CHEBI:13193"/>
        <dbReference type="ChEBI" id="CHEBI:15378"/>
        <dbReference type="ChEBI" id="CHEBI:16382"/>
        <dbReference type="ChEBI" id="CHEBI:17499"/>
        <dbReference type="ChEBI" id="CHEBI:231647"/>
        <dbReference type="ChEBI" id="CHEBI:233340"/>
    </reaction>
    <physiologicalReaction direction="right-to-left" evidence="1">
        <dbReference type="Rhea" id="RHEA:83825"/>
    </physiologicalReaction>
</comment>
<comment type="catalytic activity">
    <reaction evidence="1">
        <text>3'-iodothyronamine + iodide + A + H(+) = 3,3'-diiodothyronamine + AH2</text>
        <dbReference type="Rhea" id="RHEA:83815"/>
        <dbReference type="ChEBI" id="CHEBI:13193"/>
        <dbReference type="ChEBI" id="CHEBI:15378"/>
        <dbReference type="ChEBI" id="CHEBI:16382"/>
        <dbReference type="ChEBI" id="CHEBI:17499"/>
        <dbReference type="ChEBI" id="CHEBI:233339"/>
        <dbReference type="ChEBI" id="CHEBI:233341"/>
    </reaction>
    <physiologicalReaction direction="right-to-left" evidence="1">
        <dbReference type="Rhea" id="RHEA:83817"/>
    </physiologicalReaction>
</comment>
<comment type="catalytic activity">
    <reaction evidence="1">
        <text>thyronamine + iodide + A + H(+) = 3-iodothyronamine + AH2</text>
        <dbReference type="Rhea" id="RHEA:83819"/>
        <dbReference type="ChEBI" id="CHEBI:13193"/>
        <dbReference type="ChEBI" id="CHEBI:15378"/>
        <dbReference type="ChEBI" id="CHEBI:16382"/>
        <dbReference type="ChEBI" id="CHEBI:17499"/>
        <dbReference type="ChEBI" id="CHEBI:231647"/>
        <dbReference type="ChEBI" id="CHEBI:233334"/>
    </reaction>
    <physiologicalReaction direction="right-to-left" evidence="1">
        <dbReference type="Rhea" id="RHEA:83821"/>
    </physiologicalReaction>
</comment>
<comment type="subunit">
    <text evidence="1">Monomer. Homodimer. May undergo minor heretodimerization with DIO1 and DIO2 (By similarity).</text>
</comment>
<comment type="subcellular location">
    <subcellularLocation>
        <location evidence="1">Cell membrane</location>
        <topology evidence="2">Single-pass type II membrane protein</topology>
    </subcellularLocation>
    <subcellularLocation>
        <location evidence="1">Endosome membrane</location>
        <topology evidence="2">Single-pass type II membrane protein</topology>
    </subcellularLocation>
</comment>
<comment type="similarity">
    <text evidence="4">Belongs to the iodothyronine deiodinase family.</text>
</comment>
<sequence>AACILLFPRFLLTAVMLWLLDFLCIRKKMLTMPTAEEAAGAGEGPPPDDPPVCVSDSNRMFTLESLKAVWHGQKLDFFKSAHVGSPAPNPEVIQLDGQKRLRILDFARGKRPLILNFGSCTUPPFMARLRSFRRLAADFVDIADFLLVYIEEAHPSDGWVSSDAAYSIPKHQCLQDRLRAAQLMREGAPDCPLAVDTMDNASSAAYGAYFERLYVIQEEKVMYQGGRGPEGYKISELRTWLDQYKTRLQSPGAVVIQV</sequence>
<evidence type="ECO:0000250" key="1">
    <source>
        <dbReference type="UniProtKB" id="P55073"/>
    </source>
</evidence>
<evidence type="ECO:0000255" key="2"/>
<evidence type="ECO:0000269" key="3">
    <source>
    </source>
</evidence>
<evidence type="ECO:0000305" key="4"/>
<evidence type="ECO:0000305" key="5">
    <source>
    </source>
</evidence>
<name>IOD3_CHICK</name>
<accession>O42412</accession>
<gene>
    <name type="primary">DIO3</name>
</gene>
<dbReference type="EC" id="1.21.99.3" evidence="3"/>
<dbReference type="EMBL" id="Y11273">
    <property type="protein sequence ID" value="CAA72136.1"/>
    <property type="molecule type" value="mRNA"/>
</dbReference>
<dbReference type="RefSeq" id="NP_001116120.1">
    <property type="nucleotide sequence ID" value="NM_001122648.2"/>
</dbReference>
<dbReference type="FunCoup" id="O42412">
    <property type="interactions" value="1"/>
</dbReference>
<dbReference type="GeneID" id="395939"/>
<dbReference type="KEGG" id="gga:395939"/>
<dbReference type="CTD" id="1735"/>
<dbReference type="VEuPathDB" id="HostDB:geneid_395939"/>
<dbReference type="InParanoid" id="O42412"/>
<dbReference type="OrthoDB" id="428577at2759"/>
<dbReference type="PhylomeDB" id="O42412"/>
<dbReference type="BRENDA" id="1.21.99.3">
    <property type="organism ID" value="1306"/>
</dbReference>
<dbReference type="PRO" id="PR:O42412"/>
<dbReference type="Proteomes" id="UP000000539">
    <property type="component" value="Unassembled WGS sequence"/>
</dbReference>
<dbReference type="GO" id="GO:0010008">
    <property type="term" value="C:endosome membrane"/>
    <property type="evidence" value="ECO:0007669"/>
    <property type="project" value="UniProtKB-SubCell"/>
</dbReference>
<dbReference type="GO" id="GO:0005886">
    <property type="term" value="C:plasma membrane"/>
    <property type="evidence" value="ECO:0007669"/>
    <property type="project" value="UniProtKB-SubCell"/>
</dbReference>
<dbReference type="GO" id="GO:0004800">
    <property type="term" value="F:thyroxine 5'-deiodinase activity"/>
    <property type="evidence" value="ECO:0007669"/>
    <property type="project" value="InterPro"/>
</dbReference>
<dbReference type="GO" id="GO:0033798">
    <property type="term" value="F:thyroxine 5-deiodinase activity"/>
    <property type="evidence" value="ECO:0000314"/>
    <property type="project" value="UniProtKB"/>
</dbReference>
<dbReference type="GO" id="GO:0042446">
    <property type="term" value="P:hormone biosynthetic process"/>
    <property type="evidence" value="ECO:0007669"/>
    <property type="project" value="UniProtKB-KW"/>
</dbReference>
<dbReference type="GO" id="GO:0042404">
    <property type="term" value="P:thyroid hormone catabolic process"/>
    <property type="evidence" value="ECO:0000314"/>
    <property type="project" value="UniProtKB"/>
</dbReference>
<dbReference type="GO" id="GO:0042403">
    <property type="term" value="P:thyroid hormone metabolic process"/>
    <property type="evidence" value="ECO:0000318"/>
    <property type="project" value="GO_Central"/>
</dbReference>
<dbReference type="FunFam" id="3.40.30.10:FF:000239">
    <property type="entry name" value="Iodothyronine deiodinase"/>
    <property type="match status" value="1"/>
</dbReference>
<dbReference type="Gene3D" id="3.40.30.10">
    <property type="entry name" value="Glutaredoxin"/>
    <property type="match status" value="1"/>
</dbReference>
<dbReference type="InterPro" id="IPR000643">
    <property type="entry name" value="Iodothyronine_deiodinase"/>
</dbReference>
<dbReference type="InterPro" id="IPR008261">
    <property type="entry name" value="Iodothyronine_deiodinase_AS"/>
</dbReference>
<dbReference type="InterPro" id="IPR027252">
    <property type="entry name" value="Iodothyronine_deiodinase_I/III"/>
</dbReference>
<dbReference type="InterPro" id="IPR036249">
    <property type="entry name" value="Thioredoxin-like_sf"/>
</dbReference>
<dbReference type="PANTHER" id="PTHR11781">
    <property type="entry name" value="IODOTHYRONINE DEIODINASE"/>
    <property type="match status" value="1"/>
</dbReference>
<dbReference type="PANTHER" id="PTHR11781:SF4">
    <property type="entry name" value="THYROXINE 5-DEIODINASE"/>
    <property type="match status" value="1"/>
</dbReference>
<dbReference type="Pfam" id="PF00837">
    <property type="entry name" value="T4_deiodinase"/>
    <property type="match status" value="1"/>
</dbReference>
<dbReference type="PIRSF" id="PIRSF001330">
    <property type="entry name" value="IOD"/>
    <property type="match status" value="1"/>
</dbReference>
<dbReference type="PIRSF" id="PIRSF500144">
    <property type="entry name" value="IODI_III"/>
    <property type="match status" value="1"/>
</dbReference>
<dbReference type="SUPFAM" id="SSF52833">
    <property type="entry name" value="Thioredoxin-like"/>
    <property type="match status" value="1"/>
</dbReference>
<dbReference type="PROSITE" id="PS01205">
    <property type="entry name" value="T4_DEIODINASE"/>
    <property type="match status" value="1"/>
</dbReference>
<reference key="1">
    <citation type="journal article" date="1997" name="Endocrinology">
        <title>Expression of chicken hepatic type I and type III iodothyronine deiodinases during embryonic development.</title>
        <authorList>
            <person name="van der Geyten S."/>
            <person name="Sanders J.P."/>
            <person name="Kaptein E."/>
            <person name="Darras V.M."/>
            <person name="Kuehn E.R."/>
            <person name="Leonard J.L."/>
            <person name="Visser T.J."/>
        </authorList>
    </citation>
    <scope>NUCLEOTIDE SEQUENCE [MRNA]</scope>
    <scope>FUNCTION</scope>
    <scope>CATALYTIC ACTIVITY</scope>
    <source>
        <strain>HYBRO</strain>
        <tissue>Liver</tissue>
    </source>
</reference>
<feature type="chain" id="PRO_0000154326" description="Thyroxine 5-deiodinase">
    <location>
        <begin position="1" status="less than"/>
        <end position="258"/>
    </location>
</feature>
<feature type="transmembrane region" description="Helical; Signal-anchor for type II membrane protein" evidence="2">
    <location>
        <begin position="1" status="less than"/>
        <end position="20"/>
    </location>
</feature>
<feature type="topological domain" description="Extracellular" evidence="2">
    <location>
        <begin position="21"/>
        <end position="258"/>
    </location>
</feature>
<feature type="active site" evidence="1">
    <location>
        <position position="122"/>
    </location>
</feature>
<feature type="non-standard amino acid" description="Selenocysteine" evidence="1">
    <location>
        <position position="122"/>
    </location>
</feature>
<feature type="non-terminal residue">
    <location>
        <position position="1"/>
    </location>
</feature>
<keyword id="KW-1003">Cell membrane</keyword>
<keyword id="KW-0967">Endosome</keyword>
<keyword id="KW-0472">Membrane</keyword>
<keyword id="KW-0560">Oxidoreductase</keyword>
<keyword id="KW-1185">Reference proteome</keyword>
<keyword id="KW-0712">Selenocysteine</keyword>
<keyword id="KW-0735">Signal-anchor</keyword>
<keyword id="KW-0893">Thyroid hormones biosynthesis</keyword>
<keyword id="KW-0812">Transmembrane</keyword>
<keyword id="KW-1133">Transmembrane helix</keyword>
<protein>
    <recommendedName>
        <fullName>Thyroxine 5-deiodinase</fullName>
        <ecNumber evidence="3">1.21.99.3</ecNumber>
    </recommendedName>
    <alternativeName>
        <fullName>5DIII</fullName>
    </alternativeName>
    <alternativeName>
        <fullName>DIOIII</fullName>
    </alternativeName>
    <alternativeName>
        <fullName>Type 3 DI</fullName>
    </alternativeName>
    <alternativeName>
        <fullName>Type III iodothyronine deiodinase</fullName>
    </alternativeName>
</protein>
<proteinExistence type="evidence at protein level"/>
<organism>
    <name type="scientific">Gallus gallus</name>
    <name type="common">Chicken</name>
    <dbReference type="NCBI Taxonomy" id="9031"/>
    <lineage>
        <taxon>Eukaryota</taxon>
        <taxon>Metazoa</taxon>
        <taxon>Chordata</taxon>
        <taxon>Craniata</taxon>
        <taxon>Vertebrata</taxon>
        <taxon>Euteleostomi</taxon>
        <taxon>Archelosauria</taxon>
        <taxon>Archosauria</taxon>
        <taxon>Dinosauria</taxon>
        <taxon>Saurischia</taxon>
        <taxon>Theropoda</taxon>
        <taxon>Coelurosauria</taxon>
        <taxon>Aves</taxon>
        <taxon>Neognathae</taxon>
        <taxon>Galloanserae</taxon>
        <taxon>Galliformes</taxon>
        <taxon>Phasianidae</taxon>
        <taxon>Phasianinae</taxon>
        <taxon>Gallus</taxon>
    </lineage>
</organism>